<sequence length="688" mass="77386">MPVSEAFAKLCVNEKPPAESAVAVKSLVFKPKTPKSATPVPIVVVALQSTTTPSALIANATSSKDPRLARDDLVKQAFQSESARAFILGDLANATSNFHLLIDHELGTVDGDTILQLNDSTYMKKSDMMKFLNNFEDSQKVVDFSQEVSKETATEGKKQQKKQQPSKAGTAAAAAAAALEDAKLIGITVDKALDFPGWYQQILTKGEMLDYYDVSGCYILRPPSYAIWENIQKWFDDKIKAIGVQNAYFPMFVSSRVLEKEKDHVEGFAPEVAWVTRAGSSELEEPIAIRPTSETVMYPYYAKWVQSYRDLPLKLNQWNSVVRWEFKHPQPFLRTREFLWQEGHTAHLTAKDAEEEVLQILDFYAGVYEELLAVPVVKGRKTEKEKFAGGDFTTTCEGYIPQTGRGIQGATSHHLGQNFSKMFNLSVENPLGSDHPKIFAYQNSWGLSTRVIGVMVMIHSDNKGLVIPPRVSQFQSVVIPVGITKKTSEEQRKHIHETARSVESRLKKVGIRAFGDYNDNYTPGWKFSQYELKGIPIRIELGPKDIEKNQVVVVRRNDSKKYVVSFDELEARIPEILEEMQGDLFKKAKELFDTHRVIVNEWSGFVPALNKKNVILAPWCGVMECEEDIKESSAKKDDGEEFEEDDKAPSMGAKSLCIPFDQPVLNEGQKCIKCERIAVNYCMFGRSY</sequence>
<evidence type="ECO:0000256" key="1">
    <source>
        <dbReference type="SAM" id="MobiDB-lite"/>
    </source>
</evidence>
<evidence type="ECO:0000305" key="2"/>
<evidence type="ECO:0007744" key="3">
    <source>
    </source>
</evidence>
<evidence type="ECO:0007744" key="4">
    <source>
    </source>
</evidence>
<proteinExistence type="evidence at protein level"/>
<protein>
    <recommendedName>
        <fullName>Putative proline--tRNA ligase YHR020W</fullName>
        <ecNumber>6.1.1.15</ecNumber>
    </recommendedName>
    <alternativeName>
        <fullName>Prolyl-tRNA synthetase</fullName>
        <shortName>ProRS</shortName>
    </alternativeName>
</protein>
<organism>
    <name type="scientific">Saccharomyces cerevisiae (strain ATCC 204508 / S288c)</name>
    <name type="common">Baker's yeast</name>
    <dbReference type="NCBI Taxonomy" id="559292"/>
    <lineage>
        <taxon>Eukaryota</taxon>
        <taxon>Fungi</taxon>
        <taxon>Dikarya</taxon>
        <taxon>Ascomycota</taxon>
        <taxon>Saccharomycotina</taxon>
        <taxon>Saccharomycetes</taxon>
        <taxon>Saccharomycetales</taxon>
        <taxon>Saccharomycetaceae</taxon>
        <taxon>Saccharomyces</taxon>
    </lineage>
</organism>
<comment type="catalytic activity">
    <reaction>
        <text>tRNA(Pro) + L-proline + ATP = L-prolyl-tRNA(Pro) + AMP + diphosphate</text>
        <dbReference type="Rhea" id="RHEA:14305"/>
        <dbReference type="Rhea" id="RHEA-COMP:9700"/>
        <dbReference type="Rhea" id="RHEA-COMP:9702"/>
        <dbReference type="ChEBI" id="CHEBI:30616"/>
        <dbReference type="ChEBI" id="CHEBI:33019"/>
        <dbReference type="ChEBI" id="CHEBI:60039"/>
        <dbReference type="ChEBI" id="CHEBI:78442"/>
        <dbReference type="ChEBI" id="CHEBI:78532"/>
        <dbReference type="ChEBI" id="CHEBI:456215"/>
        <dbReference type="EC" id="6.1.1.15"/>
    </reaction>
</comment>
<comment type="similarity">
    <text evidence="2">Belongs to the class-II aminoacyl-tRNA synthetase family.</text>
</comment>
<feature type="chain" id="PRO_0000139355" description="Putative proline--tRNA ligase YHR020W">
    <location>
        <begin position="1"/>
        <end position="688"/>
    </location>
</feature>
<feature type="region of interest" description="Disordered" evidence="1">
    <location>
        <begin position="631"/>
        <end position="650"/>
    </location>
</feature>
<feature type="modified residue" description="Phosphoserine" evidence="3">
    <location>
        <position position="149"/>
    </location>
</feature>
<feature type="modified residue" description="Phosphothreonine" evidence="3">
    <location>
        <position position="170"/>
    </location>
</feature>
<feature type="modified residue" description="Phosphoserine" evidence="4">
    <location>
        <position position="655"/>
    </location>
</feature>
<name>YHI0_YEAST</name>
<gene>
    <name type="ordered locus">YHR020W</name>
</gene>
<keyword id="KW-0030">Aminoacyl-tRNA synthetase</keyword>
<keyword id="KW-0067">ATP-binding</keyword>
<keyword id="KW-0436">Ligase</keyword>
<keyword id="KW-0547">Nucleotide-binding</keyword>
<keyword id="KW-0597">Phosphoprotein</keyword>
<keyword id="KW-0648">Protein biosynthesis</keyword>
<keyword id="KW-1185">Reference proteome</keyword>
<reference key="1">
    <citation type="journal article" date="1994" name="Science">
        <title>Complete nucleotide sequence of Saccharomyces cerevisiae chromosome VIII.</title>
        <authorList>
            <person name="Johnston M."/>
            <person name="Andrews S."/>
            <person name="Brinkman R."/>
            <person name="Cooper J."/>
            <person name="Ding H."/>
            <person name="Dover J."/>
            <person name="Du Z."/>
            <person name="Favello A."/>
            <person name="Fulton L."/>
            <person name="Gattung S."/>
            <person name="Geisel C."/>
            <person name="Kirsten J."/>
            <person name="Kucaba T."/>
            <person name="Hillier L.W."/>
            <person name="Jier M."/>
            <person name="Johnston L."/>
            <person name="Langston Y."/>
            <person name="Latreille P."/>
            <person name="Louis E.J."/>
            <person name="Macri C."/>
            <person name="Mardis E."/>
            <person name="Menezes S."/>
            <person name="Mouser L."/>
            <person name="Nhan M."/>
            <person name="Rifkin L."/>
            <person name="Riles L."/>
            <person name="St Peter H."/>
            <person name="Trevaskis E."/>
            <person name="Vaughan K."/>
            <person name="Vignati D."/>
            <person name="Wilcox L."/>
            <person name="Wohldman P."/>
            <person name="Waterston R."/>
            <person name="Wilson R."/>
            <person name="Vaudin M."/>
        </authorList>
    </citation>
    <scope>NUCLEOTIDE SEQUENCE [LARGE SCALE GENOMIC DNA]</scope>
    <source>
        <strain>ATCC 204508 / S288c</strain>
    </source>
</reference>
<reference key="2">
    <citation type="journal article" date="2014" name="G3 (Bethesda)">
        <title>The reference genome sequence of Saccharomyces cerevisiae: Then and now.</title>
        <authorList>
            <person name="Engel S.R."/>
            <person name="Dietrich F.S."/>
            <person name="Fisk D.G."/>
            <person name="Binkley G."/>
            <person name="Balakrishnan R."/>
            <person name="Costanzo M.C."/>
            <person name="Dwight S.S."/>
            <person name="Hitz B.C."/>
            <person name="Karra K."/>
            <person name="Nash R.S."/>
            <person name="Weng S."/>
            <person name="Wong E.D."/>
            <person name="Lloyd P."/>
            <person name="Skrzypek M.S."/>
            <person name="Miyasato S.R."/>
            <person name="Simison M."/>
            <person name="Cherry J.M."/>
        </authorList>
    </citation>
    <scope>GENOME REANNOTATION</scope>
    <source>
        <strain>ATCC 204508 / S288c</strain>
    </source>
</reference>
<reference key="3">
    <citation type="journal article" date="2008" name="Mol. Cell. Proteomics">
        <title>A multidimensional chromatography technology for in-depth phosphoproteome analysis.</title>
        <authorList>
            <person name="Albuquerque C.P."/>
            <person name="Smolka M.B."/>
            <person name="Payne S.H."/>
            <person name="Bafna V."/>
            <person name="Eng J."/>
            <person name="Zhou H."/>
        </authorList>
    </citation>
    <scope>PHOSPHORYLATION [LARGE SCALE ANALYSIS] AT SER-149 AND THR-170</scope>
    <scope>IDENTIFICATION BY MASS SPECTROMETRY [LARGE SCALE ANALYSIS]</scope>
</reference>
<reference key="4">
    <citation type="journal article" date="2009" name="Science">
        <title>Global analysis of Cdk1 substrate phosphorylation sites provides insights into evolution.</title>
        <authorList>
            <person name="Holt L.J."/>
            <person name="Tuch B.B."/>
            <person name="Villen J."/>
            <person name="Johnson A.D."/>
            <person name="Gygi S.P."/>
            <person name="Morgan D.O."/>
        </authorList>
    </citation>
    <scope>PHOSPHORYLATION [LARGE SCALE ANALYSIS] AT SER-655</scope>
    <scope>IDENTIFICATION BY MASS SPECTROMETRY [LARGE SCALE ANALYSIS]</scope>
</reference>
<accession>P38708</accession>
<accession>D3DKW5</accession>
<dbReference type="EC" id="6.1.1.15"/>
<dbReference type="EMBL" id="U10399">
    <property type="protein sequence ID" value="AAB68873.1"/>
    <property type="molecule type" value="Genomic_DNA"/>
</dbReference>
<dbReference type="EMBL" id="BK006934">
    <property type="protein sequence ID" value="DAA06709.1"/>
    <property type="molecule type" value="Genomic_DNA"/>
</dbReference>
<dbReference type="PIR" id="S46774">
    <property type="entry name" value="S46774"/>
</dbReference>
<dbReference type="RefSeq" id="NP_011884.1">
    <property type="nucleotide sequence ID" value="NM_001179150.1"/>
</dbReference>
<dbReference type="SMR" id="P38708"/>
<dbReference type="BioGRID" id="36449">
    <property type="interactions" value="317"/>
</dbReference>
<dbReference type="DIP" id="DIP-6590N"/>
<dbReference type="FunCoup" id="P38708">
    <property type="interactions" value="873"/>
</dbReference>
<dbReference type="IntAct" id="P38708">
    <property type="interactions" value="134"/>
</dbReference>
<dbReference type="MINT" id="P38708"/>
<dbReference type="STRING" id="4932.YHR020W"/>
<dbReference type="iPTMnet" id="P38708"/>
<dbReference type="PaxDb" id="4932-YHR020W"/>
<dbReference type="PeptideAtlas" id="P38708"/>
<dbReference type="EnsemblFungi" id="YHR020W_mRNA">
    <property type="protein sequence ID" value="YHR020W"/>
    <property type="gene ID" value="YHR020W"/>
</dbReference>
<dbReference type="GeneID" id="856413"/>
<dbReference type="KEGG" id="sce:YHR020W"/>
<dbReference type="AGR" id="SGD:S000001062"/>
<dbReference type="SGD" id="S000001062">
    <property type="gene designation" value="YHR020W"/>
</dbReference>
<dbReference type="VEuPathDB" id="FungiDB:YHR020W"/>
<dbReference type="eggNOG" id="KOG4163">
    <property type="taxonomic scope" value="Eukaryota"/>
</dbReference>
<dbReference type="GeneTree" id="ENSGT00940000170501"/>
<dbReference type="HOGENOM" id="CLU_001882_4_1_1"/>
<dbReference type="InParanoid" id="P38708"/>
<dbReference type="OMA" id="EVYWVTH"/>
<dbReference type="OrthoDB" id="1350766at2759"/>
<dbReference type="BioCyc" id="YEAST:G3O-31081-MONOMER"/>
<dbReference type="SABIO-RK" id="P38708"/>
<dbReference type="BioGRID-ORCS" id="856413">
    <property type="hits" value="10 hits in 10 CRISPR screens"/>
</dbReference>
<dbReference type="PRO" id="PR:P38708"/>
<dbReference type="Proteomes" id="UP000002311">
    <property type="component" value="Chromosome VIII"/>
</dbReference>
<dbReference type="RNAct" id="P38708">
    <property type="molecule type" value="protein"/>
</dbReference>
<dbReference type="GO" id="GO:0017101">
    <property type="term" value="C:aminoacyl-tRNA synthetase multienzyme complex"/>
    <property type="evidence" value="ECO:0000318"/>
    <property type="project" value="GO_Central"/>
</dbReference>
<dbReference type="GO" id="GO:0005737">
    <property type="term" value="C:cytoplasm"/>
    <property type="evidence" value="ECO:0000318"/>
    <property type="project" value="GO_Central"/>
</dbReference>
<dbReference type="GO" id="GO:0002161">
    <property type="term" value="F:aminoacyl-tRNA deacylase activity"/>
    <property type="evidence" value="ECO:0007669"/>
    <property type="project" value="InterPro"/>
</dbReference>
<dbReference type="GO" id="GO:0005524">
    <property type="term" value="F:ATP binding"/>
    <property type="evidence" value="ECO:0007669"/>
    <property type="project" value="UniProtKB-KW"/>
</dbReference>
<dbReference type="GO" id="GO:0004827">
    <property type="term" value="F:proline-tRNA ligase activity"/>
    <property type="evidence" value="ECO:0000314"/>
    <property type="project" value="SGD"/>
</dbReference>
<dbReference type="GO" id="GO:0006433">
    <property type="term" value="P:prolyl-tRNA aminoacylation"/>
    <property type="evidence" value="ECO:0000314"/>
    <property type="project" value="SGD"/>
</dbReference>
<dbReference type="CDD" id="cd00862">
    <property type="entry name" value="ProRS_anticodon_zinc"/>
    <property type="match status" value="1"/>
</dbReference>
<dbReference type="CDD" id="cd00778">
    <property type="entry name" value="ProRS_core_arch_euk"/>
    <property type="match status" value="1"/>
</dbReference>
<dbReference type="FunFam" id="3.30.110.30:FF:000001">
    <property type="entry name" value="Bifunctional glutamate/proline--tRNA ligase"/>
    <property type="match status" value="1"/>
</dbReference>
<dbReference type="FunFam" id="3.30.930.10:FF:000007">
    <property type="entry name" value="Bifunctional glutamate/proline--tRNA ligase"/>
    <property type="match status" value="1"/>
</dbReference>
<dbReference type="FunFam" id="3.40.50.800:FF:000005">
    <property type="entry name" value="bifunctional glutamate/proline--tRNA ligase"/>
    <property type="match status" value="1"/>
</dbReference>
<dbReference type="Gene3D" id="3.40.50.800">
    <property type="entry name" value="Anticodon-binding domain"/>
    <property type="match status" value="1"/>
</dbReference>
<dbReference type="Gene3D" id="3.30.930.10">
    <property type="entry name" value="Bira Bifunctional Protein, Domain 2"/>
    <property type="match status" value="1"/>
</dbReference>
<dbReference type="Gene3D" id="3.30.110.30">
    <property type="entry name" value="C-terminal domain of ProRS"/>
    <property type="match status" value="1"/>
</dbReference>
<dbReference type="Gene3D" id="3.90.960.10">
    <property type="entry name" value="YbaK/aminoacyl-tRNA synthetase-associated domain"/>
    <property type="match status" value="1"/>
</dbReference>
<dbReference type="HAMAP" id="MF_01571">
    <property type="entry name" value="Pro_tRNA_synth_type3"/>
    <property type="match status" value="1"/>
</dbReference>
<dbReference type="InterPro" id="IPR002314">
    <property type="entry name" value="aa-tRNA-synt_IIb"/>
</dbReference>
<dbReference type="InterPro" id="IPR006195">
    <property type="entry name" value="aa-tRNA-synth_II"/>
</dbReference>
<dbReference type="InterPro" id="IPR045864">
    <property type="entry name" value="aa-tRNA-synth_II/BPL/LPL"/>
</dbReference>
<dbReference type="InterPro" id="IPR004154">
    <property type="entry name" value="Anticodon-bd"/>
</dbReference>
<dbReference type="InterPro" id="IPR036621">
    <property type="entry name" value="Anticodon-bd_dom_sf"/>
</dbReference>
<dbReference type="InterPro" id="IPR002316">
    <property type="entry name" value="Pro-tRNA-ligase_IIa"/>
</dbReference>
<dbReference type="InterPro" id="IPR004499">
    <property type="entry name" value="Pro-tRNA-ligase_IIa_arc-type"/>
</dbReference>
<dbReference type="InterPro" id="IPR016061">
    <property type="entry name" value="Pro-tRNA_ligase_II_C"/>
</dbReference>
<dbReference type="InterPro" id="IPR017449">
    <property type="entry name" value="Pro-tRNA_synth_II"/>
</dbReference>
<dbReference type="InterPro" id="IPR033721">
    <property type="entry name" value="ProRS_core_arch_euk"/>
</dbReference>
<dbReference type="InterPro" id="IPR036754">
    <property type="entry name" value="YbaK/aa-tRNA-synt-asso_dom_sf"/>
</dbReference>
<dbReference type="NCBIfam" id="TIGR00408">
    <property type="entry name" value="proS_fam_I"/>
    <property type="match status" value="1"/>
</dbReference>
<dbReference type="PANTHER" id="PTHR43382:SF2">
    <property type="entry name" value="BIFUNCTIONAL GLUTAMATE_PROLINE--TRNA LIGASE"/>
    <property type="match status" value="1"/>
</dbReference>
<dbReference type="PANTHER" id="PTHR43382">
    <property type="entry name" value="PROLYL-TRNA SYNTHETASE"/>
    <property type="match status" value="1"/>
</dbReference>
<dbReference type="Pfam" id="PF03129">
    <property type="entry name" value="HGTP_anticodon"/>
    <property type="match status" value="1"/>
</dbReference>
<dbReference type="Pfam" id="PF09180">
    <property type="entry name" value="ProRS-C_1"/>
    <property type="match status" value="1"/>
</dbReference>
<dbReference type="Pfam" id="PF00587">
    <property type="entry name" value="tRNA-synt_2b"/>
    <property type="match status" value="1"/>
</dbReference>
<dbReference type="PRINTS" id="PR01046">
    <property type="entry name" value="TRNASYNTHPRO"/>
</dbReference>
<dbReference type="SMART" id="SM00946">
    <property type="entry name" value="ProRS-C_1"/>
    <property type="match status" value="1"/>
</dbReference>
<dbReference type="SUPFAM" id="SSF64586">
    <property type="entry name" value="C-terminal domain of ProRS"/>
    <property type="match status" value="1"/>
</dbReference>
<dbReference type="SUPFAM" id="SSF52954">
    <property type="entry name" value="Class II aaRS ABD-related"/>
    <property type="match status" value="1"/>
</dbReference>
<dbReference type="SUPFAM" id="SSF55681">
    <property type="entry name" value="Class II aaRS and biotin synthetases"/>
    <property type="match status" value="1"/>
</dbReference>
<dbReference type="SUPFAM" id="SSF55826">
    <property type="entry name" value="YbaK/ProRS associated domain"/>
    <property type="match status" value="1"/>
</dbReference>
<dbReference type="PROSITE" id="PS50862">
    <property type="entry name" value="AA_TRNA_LIGASE_II"/>
    <property type="match status" value="1"/>
</dbReference>